<proteinExistence type="evidence at protein level"/>
<keyword id="KW-0903">Direct protein sequencing</keyword>
<keyword id="KW-0326">Glycosidase</keyword>
<keyword id="KW-0378">Hydrolase</keyword>
<keyword id="KW-0611">Plant defense</keyword>
<keyword id="KW-1185">Reference proteome</keyword>
<keyword id="KW-0732">Signal</keyword>
<keyword id="KW-0926">Vacuole</keyword>
<feature type="signal peptide" evidence="3">
    <location>
        <begin position="1"/>
        <end position="32"/>
    </location>
</feature>
<feature type="chain" id="PRO_0000011866" description="Glucan endo-1,3-beta-glucosidase">
    <location>
        <begin position="33"/>
        <end position="347"/>
    </location>
</feature>
<feature type="active site" description="Proton donor" evidence="2">
    <location>
        <position position="127"/>
    </location>
</feature>
<feature type="active site" description="Nucleophile" evidence="2">
    <location>
        <position position="270"/>
    </location>
</feature>
<name>E13A_SOYBN</name>
<dbReference type="EC" id="3.2.1.39"/>
<dbReference type="EMBL" id="M37753">
    <property type="protein sequence ID" value="AAA33946.1"/>
    <property type="molecule type" value="mRNA"/>
</dbReference>
<dbReference type="PIR" id="T07108">
    <property type="entry name" value="T07108"/>
</dbReference>
<dbReference type="RefSeq" id="NP_001238474.1">
    <property type="nucleotide sequence ID" value="NM_001251545.1"/>
</dbReference>
<dbReference type="SMR" id="Q03773"/>
<dbReference type="FunCoup" id="Q03773">
    <property type="interactions" value="122"/>
</dbReference>
<dbReference type="STRING" id="3847.Q03773"/>
<dbReference type="CAZy" id="GH17">
    <property type="family name" value="Glycoside Hydrolase Family 17"/>
</dbReference>
<dbReference type="PaxDb" id="3847-GLYMA03G28850.1"/>
<dbReference type="ProMEX" id="Q03773"/>
<dbReference type="EnsemblPlants" id="KRH66846">
    <property type="protein sequence ID" value="KRH66846"/>
    <property type="gene ID" value="GLYMA_03G132700"/>
</dbReference>
<dbReference type="GeneID" id="547822"/>
<dbReference type="Gramene" id="KRH66846">
    <property type="protein sequence ID" value="KRH66846"/>
    <property type="gene ID" value="GLYMA_03G132700"/>
</dbReference>
<dbReference type="KEGG" id="gmx:547822"/>
<dbReference type="eggNOG" id="ENOG502QQ3M">
    <property type="taxonomic scope" value="Eukaryota"/>
</dbReference>
<dbReference type="HOGENOM" id="CLU_024953_0_0_1"/>
<dbReference type="InParanoid" id="Q03773"/>
<dbReference type="OMA" id="MMDAFYA"/>
<dbReference type="OrthoDB" id="941679at2759"/>
<dbReference type="Proteomes" id="UP000008827">
    <property type="component" value="Chromosome 3"/>
</dbReference>
<dbReference type="GO" id="GO:0005773">
    <property type="term" value="C:vacuole"/>
    <property type="evidence" value="ECO:0007669"/>
    <property type="project" value="UniProtKB-SubCell"/>
</dbReference>
<dbReference type="GO" id="GO:0042973">
    <property type="term" value="F:glucan endo-1,3-beta-D-glucosidase activity"/>
    <property type="evidence" value="ECO:0007669"/>
    <property type="project" value="UniProtKB-EC"/>
</dbReference>
<dbReference type="GO" id="GO:0005975">
    <property type="term" value="P:carbohydrate metabolic process"/>
    <property type="evidence" value="ECO:0007669"/>
    <property type="project" value="InterPro"/>
</dbReference>
<dbReference type="GO" id="GO:0006952">
    <property type="term" value="P:defense response"/>
    <property type="evidence" value="ECO:0007669"/>
    <property type="project" value="UniProtKB-KW"/>
</dbReference>
<dbReference type="FunFam" id="3.20.20.80:FF:000010">
    <property type="entry name" value="glucan endo-1,3-beta-glucosidase, basic"/>
    <property type="match status" value="1"/>
</dbReference>
<dbReference type="Gene3D" id="3.20.20.80">
    <property type="entry name" value="Glycosidases"/>
    <property type="match status" value="1"/>
</dbReference>
<dbReference type="InterPro" id="IPR000490">
    <property type="entry name" value="Glyco_hydro_17"/>
</dbReference>
<dbReference type="InterPro" id="IPR044965">
    <property type="entry name" value="Glyco_hydro_17_plant"/>
</dbReference>
<dbReference type="InterPro" id="IPR017853">
    <property type="entry name" value="Glycoside_hydrolase_SF"/>
</dbReference>
<dbReference type="PANTHER" id="PTHR32227">
    <property type="entry name" value="GLUCAN ENDO-1,3-BETA-GLUCOSIDASE BG1-RELATED-RELATED"/>
    <property type="match status" value="1"/>
</dbReference>
<dbReference type="Pfam" id="PF00332">
    <property type="entry name" value="Glyco_hydro_17"/>
    <property type="match status" value="1"/>
</dbReference>
<dbReference type="SUPFAM" id="SSF51445">
    <property type="entry name" value="(Trans)glycosidases"/>
    <property type="match status" value="1"/>
</dbReference>
<dbReference type="PROSITE" id="PS00587">
    <property type="entry name" value="GLYCOSYL_HYDROL_F17"/>
    <property type="match status" value="1"/>
</dbReference>
<sequence length="347" mass="38112">MAKYHSSGKSSSMTAIAFLFILLITYTGTTDAQSGVCYGRLGNNLPTPQEVVALYNQANIRRMRIYGPSPEVLEALRGSNIELLLDIPNDNLRNLASSQDNANKWVQDNIKNYANNVRFRYVSVGNEVKPEHSFAQFLVPALENIQRAISNAGLGNQVKVSTAIDTGALAESFPPSKGSFKSDYRGAYLDGVIRFLVNNNAPLMVNVYSYFAYTANPKDISLDYALFRSPSVVVQDGSLGYRNLFDASVDAVYAALEKAGGGSLNIVVSESGWPSSGGTATSLDNARTYNTNLVRNVKQGTPKRPGAPLETYVFAMFDENQKQPEFEKFWGLFSPITKQPKYSINFN</sequence>
<comment type="function">
    <text>Is thought to be an important plant defense-related product against fungal pathogens. Is capable of releasing soluble and highly active elicitor molecules from fungus cell walls.</text>
</comment>
<comment type="catalytic activity">
    <reaction>
        <text>Hydrolysis of (1-&gt;3)-beta-D-glucosidic linkages in (1-&gt;3)-beta-D-glucans.</text>
        <dbReference type="EC" id="3.2.1.39"/>
    </reaction>
</comment>
<comment type="subcellular location">
    <subcellularLocation>
        <location evidence="1">Vacuole</location>
    </subcellularLocation>
    <text evidence="1">In intact tissues.</text>
</comment>
<comment type="induction">
    <text>By ethylene.</text>
</comment>
<comment type="PTM">
    <text>The N-terminus is blocked.</text>
</comment>
<comment type="similarity">
    <text evidence="4">Belongs to the glycosyl hydrolase 17 family.</text>
</comment>
<accession>Q03773</accession>
<protein>
    <recommendedName>
        <fullName>Glucan endo-1,3-beta-glucosidase</fullName>
        <ecNumber>3.2.1.39</ecNumber>
    </recommendedName>
    <alternativeName>
        <fullName>(1-&gt;3)-beta-glucan endohydrolase</fullName>
        <shortName>(1-&gt;3)-beta-glucanase</shortName>
    </alternativeName>
    <alternativeName>
        <fullName>Beta-1,3-endoglucanase</fullName>
    </alternativeName>
</protein>
<evidence type="ECO:0000250" key="1"/>
<evidence type="ECO:0000250" key="2">
    <source>
        <dbReference type="UniProtKB" id="O22317"/>
    </source>
</evidence>
<evidence type="ECO:0000255" key="3"/>
<evidence type="ECO:0000305" key="4"/>
<organism>
    <name type="scientific">Glycine max</name>
    <name type="common">Soybean</name>
    <name type="synonym">Glycine hispida</name>
    <dbReference type="NCBI Taxonomy" id="3847"/>
    <lineage>
        <taxon>Eukaryota</taxon>
        <taxon>Viridiplantae</taxon>
        <taxon>Streptophyta</taxon>
        <taxon>Embryophyta</taxon>
        <taxon>Tracheophyta</taxon>
        <taxon>Spermatophyta</taxon>
        <taxon>Magnoliopsida</taxon>
        <taxon>eudicotyledons</taxon>
        <taxon>Gunneridae</taxon>
        <taxon>Pentapetalae</taxon>
        <taxon>rosids</taxon>
        <taxon>fabids</taxon>
        <taxon>Fabales</taxon>
        <taxon>Fabaceae</taxon>
        <taxon>Papilionoideae</taxon>
        <taxon>50 kb inversion clade</taxon>
        <taxon>NPAAA clade</taxon>
        <taxon>indigoferoid/millettioid clade</taxon>
        <taxon>Phaseoleae</taxon>
        <taxon>Glycine</taxon>
        <taxon>Glycine subgen. Soja</taxon>
    </lineage>
</organism>
<reference key="1">
    <citation type="journal article" date="1990" name="Plant Physiol.">
        <title>Molecular cloning and ethylene induction of mRNA encoding a phytoalexin elicitor-releasing factor, beta-1,3-endoglucanase, in soybean.</title>
        <authorList>
            <person name="Takeuchi Y."/>
            <person name="Yoshikawa M."/>
            <person name="Takeba G."/>
            <person name="Tanaka K."/>
            <person name="Shibata D."/>
            <person name="Horino O."/>
        </authorList>
    </citation>
    <scope>NUCLEOTIDE SEQUENCE [MRNA]</scope>
    <scope>PROTEIN SEQUENCE OF 186-194 AND 219-224</scope>
    <source>
        <strain>cv. Harosoy 63</strain>
        <tissue>Cotyledon</tissue>
    </source>
</reference>